<protein>
    <recommendedName>
        <fullName>Transposase for transposon Tn4430</fullName>
    </recommendedName>
</protein>
<keyword id="KW-0002">3D-structure</keyword>
<keyword id="KW-0233">DNA recombination</keyword>
<keyword id="KW-0238">DNA-binding</keyword>
<keyword id="KW-0614">Plasmid</keyword>
<keyword id="KW-0814">Transposable element</keyword>
<keyword id="KW-0815">Transposition</keyword>
<organism>
    <name type="scientific">Bacillus thuringiensis</name>
    <dbReference type="NCBI Taxonomy" id="1428"/>
    <lineage>
        <taxon>Bacteria</taxon>
        <taxon>Bacillati</taxon>
        <taxon>Bacillota</taxon>
        <taxon>Bacilli</taxon>
        <taxon>Bacillales</taxon>
        <taxon>Bacillaceae</taxon>
        <taxon>Bacillus</taxon>
        <taxon>Bacillus cereus group</taxon>
    </lineage>
</organism>
<gene>
    <name type="primary">tnpA</name>
</gene>
<reference key="1">
    <citation type="journal article" date="1988" name="Nucleic Acids Res.">
        <title>Complete nucleotide sequence of pGI2, a Bacillus thuringiensis plasmid containing Tn4430.</title>
        <authorList>
            <person name="Mahillon J."/>
            <person name="Seurinck J."/>
        </authorList>
    </citation>
    <scope>NUCLEOTIDE SEQUENCE [GENOMIC DNA]</scope>
    <source>
        <strain>H1.1</strain>
    </source>
</reference>
<reference key="2">
    <citation type="journal article" date="1988" name="EMBO J.">
        <title>Structural and functional analysis of Tn4430: identification of an integrase-like protein involved in the co-integrate-resolution process.</title>
        <authorList>
            <person name="Mahillon J."/>
            <person name="Lereclus D."/>
        </authorList>
    </citation>
    <scope>NUCLEOTIDE SEQUENCE [GENOMIC DNA]</scope>
    <source>
        <strain>H1.1</strain>
    </source>
</reference>
<geneLocation type="plasmid">
    <name>pGI2</name>
</geneLocation>
<proteinExistence type="evidence at protein level"/>
<sequence>MGVKQLLSEAQRNELMDLSRLTEWDLVTFRTFSKHDLHLILKHRRGYNRLGFALRLVLIRYPGWSLTEYKDIPQYVVAYVTSRLRIPPEEFLVYAKRGNTLWEHLGEIRTEYGYQNFSSEYKETLLQFLVQQAMDNNNTLYLIEITISTLRKTKVILPAMYVIEDIVWEAKQQADQKVYSILHDGLVQEQKDQLDALLLPTINGKSPLAWLKDVPAQPSPESFLKVIDRLQFVQKIGLTIDTTKINTNRLRQLARLGSKYEPYAFRRFNEVKRYSMLVSFLLEITQDLIDYAIEIHDRLMMNLQTKGKKEQDEIQQANGKKLNEKILQFITVCGTLIEAKETGKDAFAALDEVMSWNEMVESVEEAKQLSRPLNYDYLDLLNTRYSYVRRYAPTLLRSLHFRATKSGEPVLQALDTIHELNETGKRKVPHGAPLHFVSNRWQKHVYDDDGNINRHYYELAALTELRNHIRSGDIFVSGSRHHKAFDDYLIPYDEWNEVSNIPNGLTAPLKAEDYITDRINRLNEHLEWLSKNSEKLEGVDISQGKLHVERLDRGTPEEAKAFSKLLHSMLPRIKLTDLLIEVASWTGFHDQFIHASTNQSPDQEEQNIVLATLMAMGTNIGLTKMAEATPGISYRQMANASQWRMYDDAMVRAQSILVNFQKEQKLSSYWGDGTTSSSDGMRLSIAVRSLHADSNPHYGTGKGGTIYRFVSDQLSAYHVKVITTNARDALHVLDGLLHHETDLKIEEHYTDTAGYTDQVFALTHLLGFRFAPRIRDLADTKLFSIPGGEEYENVQALLKGKINVKLIKENYEDIRRLAYSVQTGKVSSALIMGKLGSYARQNKLATALGEMGRIEKTLFTLDYISNKAVRRRVQKGLNKGEAINALARTIFFGQRGEFRERALQDQLQRASALNIIINAISVWNTVYMEKAVEELKARGEFREDLMPYAWPLGWEHINFLGEYKFEGLHDTGQMNLRPLRIKEPFYS</sequence>
<name>TNPA_BACTU</name>
<dbReference type="EMBL" id="X13481">
    <property type="protein sequence ID" value="CAA31833.1"/>
    <property type="molecule type" value="Genomic_DNA"/>
</dbReference>
<dbReference type="EMBL" id="X07651">
    <property type="protein sequence ID" value="CAA30492.1"/>
    <property type="molecule type" value="Genomic_DNA"/>
</dbReference>
<dbReference type="PIR" id="S00570">
    <property type="entry name" value="TQBS30"/>
</dbReference>
<dbReference type="PDB" id="7QD4">
    <property type="method" value="EM"/>
    <property type="resolution" value="2.90 A"/>
    <property type="chains" value="A/D=1-987"/>
</dbReference>
<dbReference type="PDB" id="7QD5">
    <property type="method" value="EM"/>
    <property type="resolution" value="3.10 A"/>
    <property type="chains" value="A/D=1-987"/>
</dbReference>
<dbReference type="PDB" id="7QD6">
    <property type="method" value="EM"/>
    <property type="resolution" value="3.00 A"/>
    <property type="chains" value="A/D=1-987"/>
</dbReference>
<dbReference type="PDB" id="7QD8">
    <property type="method" value="EM"/>
    <property type="resolution" value="3.60 A"/>
    <property type="chains" value="A/B=1-987"/>
</dbReference>
<dbReference type="PDBsum" id="7QD4"/>
<dbReference type="PDBsum" id="7QD5"/>
<dbReference type="PDBsum" id="7QD6"/>
<dbReference type="PDBsum" id="7QD8"/>
<dbReference type="EMDB" id="EMD-13906"/>
<dbReference type="EMDB" id="EMD-13908"/>
<dbReference type="EMDB" id="EMD-13909"/>
<dbReference type="EMDB" id="EMD-13910"/>
<dbReference type="EMDB" id="EMD-15218"/>
<dbReference type="SMR" id="P10021"/>
<dbReference type="BRENDA" id="2.7.7.B22">
    <property type="organism ID" value="711"/>
</dbReference>
<dbReference type="GO" id="GO:0003677">
    <property type="term" value="F:DNA binding"/>
    <property type="evidence" value="ECO:0007669"/>
    <property type="project" value="UniProtKB-KW"/>
</dbReference>
<dbReference type="GO" id="GO:0004803">
    <property type="term" value="F:transposase activity"/>
    <property type="evidence" value="ECO:0007669"/>
    <property type="project" value="InterPro"/>
</dbReference>
<dbReference type="GO" id="GO:0006313">
    <property type="term" value="P:DNA transposition"/>
    <property type="evidence" value="ECO:0007669"/>
    <property type="project" value="InterPro"/>
</dbReference>
<dbReference type="InterPro" id="IPR025296">
    <property type="entry name" value="DUF4158"/>
</dbReference>
<dbReference type="InterPro" id="IPR047653">
    <property type="entry name" value="Tn3-like_transpos"/>
</dbReference>
<dbReference type="InterPro" id="IPR002513">
    <property type="entry name" value="Tn3_Tnp_DDE_dom"/>
</dbReference>
<dbReference type="NCBIfam" id="NF033527">
    <property type="entry name" value="transpos_Tn3"/>
    <property type="match status" value="1"/>
</dbReference>
<dbReference type="Pfam" id="PF01526">
    <property type="entry name" value="DDE_Tnp_Tn3"/>
    <property type="match status" value="1"/>
</dbReference>
<dbReference type="Pfam" id="PF13700">
    <property type="entry name" value="DUF4158"/>
    <property type="match status" value="1"/>
</dbReference>
<comment type="function">
    <text>Required for transposition of transposon Tn4430.</text>
</comment>
<comment type="similarity">
    <text evidence="1">Belongs to the transposase 7 family.</text>
</comment>
<accession>P10021</accession>
<feature type="chain" id="PRO_0000075425" description="Transposase for transposon Tn4430">
    <location>
        <begin position="1"/>
        <end position="987"/>
    </location>
</feature>
<feature type="helix" evidence="2">
    <location>
        <begin position="9"/>
        <end position="15"/>
    </location>
</feature>
<feature type="turn" evidence="2">
    <location>
        <begin position="19"/>
        <end position="24"/>
    </location>
</feature>
<feature type="helix" evidence="2">
    <location>
        <begin position="25"/>
        <end position="28"/>
    </location>
</feature>
<feature type="helix" evidence="2">
    <location>
        <begin position="34"/>
        <end position="40"/>
    </location>
</feature>
<feature type="strand" evidence="4">
    <location>
        <begin position="43"/>
        <end position="45"/>
    </location>
</feature>
<feature type="helix" evidence="2">
    <location>
        <begin position="46"/>
        <end position="60"/>
    </location>
</feature>
<feature type="turn" evidence="2">
    <location>
        <begin position="66"/>
        <end position="68"/>
    </location>
</feature>
<feature type="helix" evidence="2">
    <location>
        <begin position="74"/>
        <end position="84"/>
    </location>
</feature>
<feature type="helix" evidence="2">
    <location>
        <begin position="90"/>
        <end position="93"/>
    </location>
</feature>
<feature type="helix" evidence="2">
    <location>
        <begin position="98"/>
        <end position="112"/>
    </location>
</feature>
<feature type="helix" evidence="2">
    <location>
        <begin position="119"/>
        <end position="135"/>
    </location>
</feature>
<feature type="helix" evidence="2">
    <location>
        <begin position="139"/>
        <end position="152"/>
    </location>
</feature>
<feature type="helix" evidence="2">
    <location>
        <begin position="160"/>
        <end position="183"/>
    </location>
</feature>
<feature type="helix" evidence="2">
    <location>
        <begin position="188"/>
        <end position="196"/>
    </location>
</feature>
<feature type="helix" evidence="2">
    <location>
        <begin position="207"/>
        <end position="212"/>
    </location>
</feature>
<feature type="helix" evidence="2">
    <location>
        <begin position="220"/>
        <end position="236"/>
    </location>
</feature>
<feature type="strand" evidence="3">
    <location>
        <begin position="243"/>
        <end position="245"/>
    </location>
</feature>
<feature type="helix" evidence="2">
    <location>
        <begin position="247"/>
        <end position="259"/>
    </location>
</feature>
<feature type="helix" evidence="2">
    <location>
        <begin position="262"/>
        <end position="267"/>
    </location>
</feature>
<feature type="helix" evidence="2">
    <location>
        <begin position="270"/>
        <end position="317"/>
    </location>
</feature>
<feature type="helix" evidence="2">
    <location>
        <begin position="319"/>
        <end position="342"/>
    </location>
</feature>
<feature type="helix" evidence="2">
    <location>
        <begin position="346"/>
        <end position="353"/>
    </location>
</feature>
<feature type="helix" evidence="2">
    <location>
        <begin position="356"/>
        <end position="369"/>
    </location>
</feature>
<feature type="helix" evidence="2">
    <location>
        <begin position="378"/>
        <end position="381"/>
    </location>
</feature>
<feature type="helix" evidence="2">
    <location>
        <begin position="385"/>
        <end position="389"/>
    </location>
</feature>
<feature type="helix" evidence="2">
    <location>
        <begin position="392"/>
        <end position="398"/>
    </location>
</feature>
<feature type="strand" evidence="2">
    <location>
        <begin position="401"/>
        <end position="403"/>
    </location>
</feature>
<feature type="turn" evidence="2">
    <location>
        <begin position="405"/>
        <end position="407"/>
    </location>
</feature>
<feature type="helix" evidence="2">
    <location>
        <begin position="408"/>
        <end position="423"/>
    </location>
</feature>
<feature type="strand" evidence="2">
    <location>
        <begin position="439"/>
        <end position="441"/>
    </location>
</feature>
<feature type="helix" evidence="2">
    <location>
        <begin position="442"/>
        <end position="445"/>
    </location>
</feature>
<feature type="helix" evidence="2">
    <location>
        <begin position="454"/>
        <end position="470"/>
    </location>
</feature>
<feature type="strand" evidence="2">
    <location>
        <begin position="473"/>
        <end position="476"/>
    </location>
</feature>
<feature type="strand" evidence="2">
    <location>
        <begin position="480"/>
        <end position="483"/>
    </location>
</feature>
<feature type="helix" evidence="2">
    <location>
        <begin position="485"/>
        <end position="488"/>
    </location>
</feature>
<feature type="strand" evidence="2">
    <location>
        <begin position="492"/>
        <end position="494"/>
    </location>
</feature>
<feature type="helix" evidence="2">
    <location>
        <begin position="495"/>
        <end position="498"/>
    </location>
</feature>
<feature type="strand" evidence="2">
    <location>
        <begin position="509"/>
        <end position="512"/>
    </location>
</feature>
<feature type="helix" evidence="2">
    <location>
        <begin position="513"/>
        <end position="529"/>
    </location>
</feature>
<feature type="helix" evidence="2">
    <location>
        <begin position="558"/>
        <end position="568"/>
    </location>
</feature>
<feature type="helix" evidence="2">
    <location>
        <begin position="575"/>
        <end position="586"/>
    </location>
</feature>
<feature type="helix" evidence="2">
    <location>
        <begin position="588"/>
        <end position="591"/>
    </location>
</feature>
<feature type="turn" evidence="2">
    <location>
        <begin position="595"/>
        <end position="597"/>
    </location>
</feature>
<feature type="helix" evidence="2">
    <location>
        <begin position="603"/>
        <end position="617"/>
    </location>
</feature>
<feature type="helix" evidence="2">
    <location>
        <begin position="622"/>
        <end position="628"/>
    </location>
</feature>
<feature type="strand" evidence="2">
    <location>
        <begin position="629"/>
        <end position="631"/>
    </location>
</feature>
<feature type="helix" evidence="2">
    <location>
        <begin position="634"/>
        <end position="644"/>
    </location>
</feature>
<feature type="helix" evidence="2">
    <location>
        <begin position="647"/>
        <end position="663"/>
    </location>
</feature>
<feature type="helix" evidence="2">
    <location>
        <begin position="667"/>
        <end position="670"/>
    </location>
</feature>
<feature type="strand" evidence="2">
    <location>
        <begin position="679"/>
        <end position="683"/>
    </location>
</feature>
<feature type="strand" evidence="2">
    <location>
        <begin position="704"/>
        <end position="708"/>
    </location>
</feature>
<feature type="strand" evidence="2">
    <location>
        <begin position="719"/>
        <end position="722"/>
    </location>
</feature>
<feature type="helix" evidence="2">
    <location>
        <begin position="729"/>
        <end position="737"/>
    </location>
</feature>
<feature type="strand" evidence="2">
    <location>
        <begin position="748"/>
        <end position="750"/>
    </location>
</feature>
<feature type="helix" evidence="2">
    <location>
        <begin position="757"/>
        <end position="765"/>
    </location>
</feature>
<feature type="strand" evidence="2">
    <location>
        <begin position="770"/>
        <end position="772"/>
    </location>
</feature>
<feature type="helix" evidence="2">
    <location>
        <begin position="805"/>
        <end position="822"/>
    </location>
</feature>
<feature type="helix" evidence="2">
    <location>
        <begin position="828"/>
        <end position="833"/>
    </location>
</feature>
<feature type="helix" evidence="2">
    <location>
        <begin position="834"/>
        <end position="836"/>
    </location>
</feature>
<feature type="helix" evidence="2">
    <location>
        <begin position="842"/>
        <end position="865"/>
    </location>
</feature>
<feature type="helix" evidence="2">
    <location>
        <begin position="868"/>
        <end position="890"/>
    </location>
</feature>
<feature type="turn" evidence="2">
    <location>
        <begin position="893"/>
        <end position="896"/>
    </location>
</feature>
<feature type="helix" evidence="2">
    <location>
        <begin position="903"/>
        <end position="937"/>
    </location>
</feature>
<feature type="turn" evidence="2">
    <location>
        <begin position="944"/>
        <end position="948"/>
    </location>
</feature>
<feature type="strand" evidence="2">
    <location>
        <begin position="955"/>
        <end position="958"/>
    </location>
</feature>
<feature type="turn" evidence="2">
    <location>
        <begin position="968"/>
        <end position="971"/>
    </location>
</feature>
<evidence type="ECO:0000305" key="1"/>
<evidence type="ECO:0007829" key="2">
    <source>
        <dbReference type="PDB" id="7QD4"/>
    </source>
</evidence>
<evidence type="ECO:0007829" key="3">
    <source>
        <dbReference type="PDB" id="7QD5"/>
    </source>
</evidence>
<evidence type="ECO:0007829" key="4">
    <source>
        <dbReference type="PDB" id="7QD6"/>
    </source>
</evidence>